<evidence type="ECO:0000255" key="1">
    <source>
        <dbReference type="PROSITE-ProRule" id="PRU00257"/>
    </source>
</evidence>
<evidence type="ECO:0000305" key="2"/>
<evidence type="ECO:0007829" key="3">
    <source>
        <dbReference type="PDB" id="2EBY"/>
    </source>
</evidence>
<sequence length="113" mass="13171">MKQATRKPTTPGDILLYEYLEPLDLKINELAELLHVHRNSVSALINNNRKLTTEMAFRLAKVFDTTVDFWLNLQAAVDLWEVENNMRTQEELGRIETVAEYLARREERAKKVA</sequence>
<accession>P0A9T6</accession>
<accession>P77303</accession>
<accession>Q2MBU4</accession>
<accession>Q47008</accession>
<keyword id="KW-0002">3D-structure</keyword>
<keyword id="KW-0238">DNA-binding</keyword>
<keyword id="KW-1185">Reference proteome</keyword>
<keyword id="KW-0804">Transcription</keyword>
<keyword id="KW-0805">Transcription regulation</keyword>
<organism>
    <name type="scientific">Escherichia coli (strain K12)</name>
    <dbReference type="NCBI Taxonomy" id="83333"/>
    <lineage>
        <taxon>Bacteria</taxon>
        <taxon>Pseudomonadati</taxon>
        <taxon>Pseudomonadota</taxon>
        <taxon>Gammaproteobacteria</taxon>
        <taxon>Enterobacterales</taxon>
        <taxon>Enterobacteriaceae</taxon>
        <taxon>Escherichia</taxon>
    </lineage>
</organism>
<proteinExistence type="evidence at protein level"/>
<name>YBAQ_ECOLI</name>
<protein>
    <recommendedName>
        <fullName>Uncharacterized HTH-type transcriptional regulator YbaQ</fullName>
    </recommendedName>
</protein>
<dbReference type="EMBL" id="U58330">
    <property type="protein sequence ID" value="AAB02269.1"/>
    <property type="molecule type" value="Genomic_DNA"/>
</dbReference>
<dbReference type="EMBL" id="U82664">
    <property type="protein sequence ID" value="AAB40237.1"/>
    <property type="status" value="ALT_INIT"/>
    <property type="molecule type" value="Genomic_DNA"/>
</dbReference>
<dbReference type="EMBL" id="U00096">
    <property type="protein sequence ID" value="AAC73585.2"/>
    <property type="molecule type" value="Genomic_DNA"/>
</dbReference>
<dbReference type="EMBL" id="AP009048">
    <property type="protein sequence ID" value="BAE76262.1"/>
    <property type="molecule type" value="Genomic_DNA"/>
</dbReference>
<dbReference type="PIR" id="B64779">
    <property type="entry name" value="B64779"/>
</dbReference>
<dbReference type="RefSeq" id="NP_415016.4">
    <property type="nucleotide sequence ID" value="NC_000913.3"/>
</dbReference>
<dbReference type="RefSeq" id="WP_000806442.1">
    <property type="nucleotide sequence ID" value="NZ_SSZK01000009.1"/>
</dbReference>
<dbReference type="PDB" id="2EBY">
    <property type="method" value="X-ray"/>
    <property type="resolution" value="2.25 A"/>
    <property type="chains" value="A/B=1-113"/>
</dbReference>
<dbReference type="PDBsum" id="2EBY"/>
<dbReference type="SMR" id="P0A9T6"/>
<dbReference type="BioGRID" id="4261982">
    <property type="interactions" value="89"/>
</dbReference>
<dbReference type="FunCoup" id="P0A9T6">
    <property type="interactions" value="55"/>
</dbReference>
<dbReference type="IntAct" id="P0A9T6">
    <property type="interactions" value="4"/>
</dbReference>
<dbReference type="STRING" id="511145.b0483"/>
<dbReference type="PaxDb" id="511145-b0483"/>
<dbReference type="EnsemblBacteria" id="AAC73585">
    <property type="protein sequence ID" value="AAC73585"/>
    <property type="gene ID" value="b0483"/>
</dbReference>
<dbReference type="GeneID" id="948800"/>
<dbReference type="KEGG" id="ecj:JW0472"/>
<dbReference type="KEGG" id="eco:b0483"/>
<dbReference type="KEGG" id="ecoc:C3026_02375"/>
<dbReference type="PATRIC" id="fig|511145.12.peg.503"/>
<dbReference type="EchoBASE" id="EB3034"/>
<dbReference type="eggNOG" id="COG3093">
    <property type="taxonomic scope" value="Bacteria"/>
</dbReference>
<dbReference type="HOGENOM" id="CLU_140230_3_2_6"/>
<dbReference type="InParanoid" id="P0A9T6"/>
<dbReference type="OMA" id="FWLNLQI"/>
<dbReference type="OrthoDB" id="9793869at2"/>
<dbReference type="PhylomeDB" id="P0A9T6"/>
<dbReference type="BioCyc" id="EcoCyc:G6259-MONOMER"/>
<dbReference type="EvolutionaryTrace" id="P0A9T6"/>
<dbReference type="PRO" id="PR:P0A9T6"/>
<dbReference type="Proteomes" id="UP000000625">
    <property type="component" value="Chromosome"/>
</dbReference>
<dbReference type="GO" id="GO:0003677">
    <property type="term" value="F:DNA binding"/>
    <property type="evidence" value="ECO:0007669"/>
    <property type="project" value="UniProtKB-KW"/>
</dbReference>
<dbReference type="CDD" id="cd00093">
    <property type="entry name" value="HTH_XRE"/>
    <property type="match status" value="1"/>
</dbReference>
<dbReference type="Gene3D" id="1.10.260.40">
    <property type="entry name" value="lambda repressor-like DNA-binding domains"/>
    <property type="match status" value="1"/>
</dbReference>
<dbReference type="InterPro" id="IPR001387">
    <property type="entry name" value="Cro/C1-type_HTH"/>
</dbReference>
<dbReference type="InterPro" id="IPR010982">
    <property type="entry name" value="Lambda_DNA-bd_dom_sf"/>
</dbReference>
<dbReference type="InterPro" id="IPR013430">
    <property type="entry name" value="Toxin_antidote_HigA"/>
</dbReference>
<dbReference type="NCBIfam" id="TIGR02607">
    <property type="entry name" value="antidote_HigA"/>
    <property type="match status" value="1"/>
</dbReference>
<dbReference type="PANTHER" id="PTHR36924">
    <property type="entry name" value="ANTITOXIN HIGA-1"/>
    <property type="match status" value="1"/>
</dbReference>
<dbReference type="PANTHER" id="PTHR36924:SF1">
    <property type="entry name" value="ANTITOXIN HIGA-1"/>
    <property type="match status" value="1"/>
</dbReference>
<dbReference type="Pfam" id="PF01381">
    <property type="entry name" value="HTH_3"/>
    <property type="match status" value="1"/>
</dbReference>
<dbReference type="SMART" id="SM00530">
    <property type="entry name" value="HTH_XRE"/>
    <property type="match status" value="1"/>
</dbReference>
<dbReference type="SUPFAM" id="SSF47413">
    <property type="entry name" value="lambda repressor-like DNA-binding domains"/>
    <property type="match status" value="1"/>
</dbReference>
<dbReference type="PROSITE" id="PS50943">
    <property type="entry name" value="HTH_CROC1"/>
    <property type="match status" value="1"/>
</dbReference>
<gene>
    <name type="primary">ybaQ</name>
    <name type="ordered locus">b0483</name>
    <name type="ordered locus">JW0472</name>
</gene>
<feature type="chain" id="PRO_0000149753" description="Uncharacterized HTH-type transcriptional regulator YbaQ">
    <location>
        <begin position="1"/>
        <end position="113"/>
    </location>
</feature>
<feature type="domain" description="HTH cro/C1-type" evidence="1">
    <location>
        <begin position="16"/>
        <end position="70"/>
    </location>
</feature>
<feature type="DNA-binding region" description="H-T-H motif" evidence="1">
    <location>
        <begin position="27"/>
        <end position="46"/>
    </location>
</feature>
<feature type="helix" evidence="3">
    <location>
        <begin position="11"/>
        <end position="18"/>
    </location>
</feature>
<feature type="turn" evidence="3">
    <location>
        <begin position="19"/>
        <end position="24"/>
    </location>
</feature>
<feature type="helix" evidence="3">
    <location>
        <begin position="27"/>
        <end position="34"/>
    </location>
</feature>
<feature type="helix" evidence="3">
    <location>
        <begin position="38"/>
        <end position="45"/>
    </location>
</feature>
<feature type="helix" evidence="3">
    <location>
        <begin position="53"/>
        <end position="63"/>
    </location>
</feature>
<feature type="helix" evidence="3">
    <location>
        <begin position="67"/>
        <end position="83"/>
    </location>
</feature>
<feature type="helix" evidence="3">
    <location>
        <begin position="86"/>
        <end position="94"/>
    </location>
</feature>
<feature type="helix" evidence="3">
    <location>
        <begin position="98"/>
        <end position="107"/>
    </location>
</feature>
<comment type="similarity">
    <text evidence="2">Belongs to the VapA/VapI family.</text>
</comment>
<comment type="sequence caution" evidence="2">
    <conflict type="erroneous initiation">
        <sequence resource="EMBL-CDS" id="AAB40237"/>
    </conflict>
    <text>Extended N-terminus.</text>
</comment>
<reference key="1">
    <citation type="submission" date="1996-06" db="EMBL/GenBank/DDBJ databases">
        <authorList>
            <person name="Das S."/>
            <person name="Chuang E."/>
            <person name="Vulpe C."/>
            <person name="Goldman J."/>
            <person name="Gitschier J."/>
        </authorList>
    </citation>
    <scope>NUCLEOTIDE SEQUENCE [GENOMIC DNA]</scope>
    <source>
        <strain>K12</strain>
    </source>
</reference>
<reference key="2">
    <citation type="submission" date="1997-01" db="EMBL/GenBank/DDBJ databases">
        <title>Sequence of minutes 4-25 of Escherichia coli.</title>
        <authorList>
            <person name="Chung E."/>
            <person name="Allen E."/>
            <person name="Araujo R."/>
            <person name="Aparicio A.M."/>
            <person name="Davis K."/>
            <person name="Duncan M."/>
            <person name="Federspiel N."/>
            <person name="Hyman R."/>
            <person name="Kalman S."/>
            <person name="Komp C."/>
            <person name="Kurdi O."/>
            <person name="Lew H."/>
            <person name="Lin D."/>
            <person name="Namath A."/>
            <person name="Oefner P."/>
            <person name="Roberts D."/>
            <person name="Schramm S."/>
            <person name="Davis R.W."/>
        </authorList>
    </citation>
    <scope>NUCLEOTIDE SEQUENCE [LARGE SCALE GENOMIC DNA]</scope>
    <source>
        <strain>K12 / MG1655 / ATCC 47076</strain>
    </source>
</reference>
<reference key="3">
    <citation type="journal article" date="1997" name="Science">
        <title>The complete genome sequence of Escherichia coli K-12.</title>
        <authorList>
            <person name="Blattner F.R."/>
            <person name="Plunkett G. III"/>
            <person name="Bloch C.A."/>
            <person name="Perna N.T."/>
            <person name="Burland V."/>
            <person name="Riley M."/>
            <person name="Collado-Vides J."/>
            <person name="Glasner J.D."/>
            <person name="Rode C.K."/>
            <person name="Mayhew G.F."/>
            <person name="Gregor J."/>
            <person name="Davis N.W."/>
            <person name="Kirkpatrick H.A."/>
            <person name="Goeden M.A."/>
            <person name="Rose D.J."/>
            <person name="Mau B."/>
            <person name="Shao Y."/>
        </authorList>
    </citation>
    <scope>NUCLEOTIDE SEQUENCE [LARGE SCALE GENOMIC DNA]</scope>
    <source>
        <strain>K12 / MG1655 / ATCC 47076</strain>
    </source>
</reference>
<reference key="4">
    <citation type="journal article" date="2006" name="Mol. Syst. Biol.">
        <title>Highly accurate genome sequences of Escherichia coli K-12 strains MG1655 and W3110.</title>
        <authorList>
            <person name="Hayashi K."/>
            <person name="Morooka N."/>
            <person name="Yamamoto Y."/>
            <person name="Fujita K."/>
            <person name="Isono K."/>
            <person name="Choi S."/>
            <person name="Ohtsubo E."/>
            <person name="Baba T."/>
            <person name="Wanner B.L."/>
            <person name="Mori H."/>
            <person name="Horiuchi T."/>
        </authorList>
    </citation>
    <scope>NUCLEOTIDE SEQUENCE [LARGE SCALE GENOMIC DNA]</scope>
    <source>
        <strain>K12 / W3110 / ATCC 27325 / DSM 5911</strain>
    </source>
</reference>